<protein>
    <recommendedName>
        <fullName evidence="1">Large ribosomal subunit protein bL20</fullName>
    </recommendedName>
    <alternativeName>
        <fullName evidence="2">50S ribosomal protein L20</fullName>
    </alternativeName>
</protein>
<dbReference type="EMBL" id="CP000305">
    <property type="protein sequence ID" value="ABG18214.1"/>
    <property type="molecule type" value="Genomic_DNA"/>
</dbReference>
<dbReference type="EMBL" id="ACNQ01000010">
    <property type="protein sequence ID" value="EEO76790.1"/>
    <property type="molecule type" value="Genomic_DNA"/>
</dbReference>
<dbReference type="RefSeq" id="WP_002211833.1">
    <property type="nucleotide sequence ID" value="NZ_ACNQ01000010.1"/>
</dbReference>
<dbReference type="SMR" id="Q1CIG6"/>
<dbReference type="GeneID" id="96665819"/>
<dbReference type="KEGG" id="ypn:YPN_1885"/>
<dbReference type="HOGENOM" id="CLU_123265_0_1_6"/>
<dbReference type="Proteomes" id="UP000008936">
    <property type="component" value="Chromosome"/>
</dbReference>
<dbReference type="GO" id="GO:1990904">
    <property type="term" value="C:ribonucleoprotein complex"/>
    <property type="evidence" value="ECO:0007669"/>
    <property type="project" value="UniProtKB-KW"/>
</dbReference>
<dbReference type="GO" id="GO:0005840">
    <property type="term" value="C:ribosome"/>
    <property type="evidence" value="ECO:0007669"/>
    <property type="project" value="UniProtKB-KW"/>
</dbReference>
<dbReference type="GO" id="GO:0019843">
    <property type="term" value="F:rRNA binding"/>
    <property type="evidence" value="ECO:0007669"/>
    <property type="project" value="UniProtKB-UniRule"/>
</dbReference>
<dbReference type="GO" id="GO:0003735">
    <property type="term" value="F:structural constituent of ribosome"/>
    <property type="evidence" value="ECO:0007669"/>
    <property type="project" value="InterPro"/>
</dbReference>
<dbReference type="GO" id="GO:0000027">
    <property type="term" value="P:ribosomal large subunit assembly"/>
    <property type="evidence" value="ECO:0007669"/>
    <property type="project" value="UniProtKB-UniRule"/>
</dbReference>
<dbReference type="GO" id="GO:0006412">
    <property type="term" value="P:translation"/>
    <property type="evidence" value="ECO:0007669"/>
    <property type="project" value="InterPro"/>
</dbReference>
<dbReference type="CDD" id="cd07026">
    <property type="entry name" value="Ribosomal_L20"/>
    <property type="match status" value="1"/>
</dbReference>
<dbReference type="FunFam" id="1.10.1900.20:FF:000001">
    <property type="entry name" value="50S ribosomal protein L20"/>
    <property type="match status" value="1"/>
</dbReference>
<dbReference type="Gene3D" id="6.10.160.10">
    <property type="match status" value="1"/>
</dbReference>
<dbReference type="Gene3D" id="1.10.1900.20">
    <property type="entry name" value="Ribosomal protein L20"/>
    <property type="match status" value="1"/>
</dbReference>
<dbReference type="HAMAP" id="MF_00382">
    <property type="entry name" value="Ribosomal_bL20"/>
    <property type="match status" value="1"/>
</dbReference>
<dbReference type="InterPro" id="IPR005813">
    <property type="entry name" value="Ribosomal_bL20"/>
</dbReference>
<dbReference type="InterPro" id="IPR049946">
    <property type="entry name" value="RIBOSOMAL_L20_CS"/>
</dbReference>
<dbReference type="InterPro" id="IPR035566">
    <property type="entry name" value="Ribosomal_protein_bL20_C"/>
</dbReference>
<dbReference type="NCBIfam" id="TIGR01032">
    <property type="entry name" value="rplT_bact"/>
    <property type="match status" value="1"/>
</dbReference>
<dbReference type="PANTHER" id="PTHR10986">
    <property type="entry name" value="39S RIBOSOMAL PROTEIN L20"/>
    <property type="match status" value="1"/>
</dbReference>
<dbReference type="Pfam" id="PF00453">
    <property type="entry name" value="Ribosomal_L20"/>
    <property type="match status" value="1"/>
</dbReference>
<dbReference type="PRINTS" id="PR00062">
    <property type="entry name" value="RIBOSOMALL20"/>
</dbReference>
<dbReference type="SUPFAM" id="SSF74731">
    <property type="entry name" value="Ribosomal protein L20"/>
    <property type="match status" value="1"/>
</dbReference>
<dbReference type="PROSITE" id="PS00937">
    <property type="entry name" value="RIBOSOMAL_L20"/>
    <property type="match status" value="1"/>
</dbReference>
<feature type="chain" id="PRO_1000049104" description="Large ribosomal subunit protein bL20">
    <location>
        <begin position="1"/>
        <end position="118"/>
    </location>
</feature>
<gene>
    <name evidence="1" type="primary">rplT</name>
    <name type="ordered locus">YPN_1885</name>
    <name type="ORF">YP516_2097</name>
</gene>
<proteinExistence type="inferred from homology"/>
<accession>Q1CIG6</accession>
<accession>C4GTI9</accession>
<keyword id="KW-0687">Ribonucleoprotein</keyword>
<keyword id="KW-0689">Ribosomal protein</keyword>
<keyword id="KW-0694">RNA-binding</keyword>
<keyword id="KW-0699">rRNA-binding</keyword>
<reference key="1">
    <citation type="journal article" date="2006" name="J. Bacteriol.">
        <title>Complete genome sequence of Yersinia pestis strains Antiqua and Nepal516: evidence of gene reduction in an emerging pathogen.</title>
        <authorList>
            <person name="Chain P.S.G."/>
            <person name="Hu P."/>
            <person name="Malfatti S.A."/>
            <person name="Radnedge L."/>
            <person name="Larimer F."/>
            <person name="Vergez L.M."/>
            <person name="Worsham P."/>
            <person name="Chu M.C."/>
            <person name="Andersen G.L."/>
        </authorList>
    </citation>
    <scope>NUCLEOTIDE SEQUENCE [LARGE SCALE GENOMIC DNA]</scope>
    <source>
        <strain>Nepal516</strain>
    </source>
</reference>
<reference key="2">
    <citation type="submission" date="2009-04" db="EMBL/GenBank/DDBJ databases">
        <title>Yersinia pestis Nepal516A whole genome shotgun sequencing project.</title>
        <authorList>
            <person name="Plunkett G. III"/>
            <person name="Anderson B.D."/>
            <person name="Baumler D.J."/>
            <person name="Burland V."/>
            <person name="Cabot E.L."/>
            <person name="Glasner J.D."/>
            <person name="Mau B."/>
            <person name="Neeno-Eckwall E."/>
            <person name="Perna N.T."/>
            <person name="Munk A.C."/>
            <person name="Tapia R."/>
            <person name="Green L.D."/>
            <person name="Rogers Y.C."/>
            <person name="Detter J.C."/>
            <person name="Bruce D.C."/>
            <person name="Brettin T.S."/>
        </authorList>
    </citation>
    <scope>NUCLEOTIDE SEQUENCE [LARGE SCALE GENOMIC DNA]</scope>
    <source>
        <strain>Nepal516</strain>
    </source>
</reference>
<sequence length="118" mass="13511">MARVKRGVIARARHKKILKQAKGYYGARSRVYRVAFQAVIKAGQYAYRDRRQRKRQFRQLWIARINAAARQNGLSYSRFINGLKKASVEIDRKILADIAVFDKVAFSALVEKAKAALA</sequence>
<comment type="function">
    <text evidence="1">Binds directly to 23S ribosomal RNA and is necessary for the in vitro assembly process of the 50S ribosomal subunit. It is not involved in the protein synthesizing functions of that subunit.</text>
</comment>
<comment type="similarity">
    <text evidence="1">Belongs to the bacterial ribosomal protein bL20 family.</text>
</comment>
<name>RL20_YERPN</name>
<organism>
    <name type="scientific">Yersinia pestis bv. Antiqua (strain Nepal516)</name>
    <dbReference type="NCBI Taxonomy" id="377628"/>
    <lineage>
        <taxon>Bacteria</taxon>
        <taxon>Pseudomonadati</taxon>
        <taxon>Pseudomonadota</taxon>
        <taxon>Gammaproteobacteria</taxon>
        <taxon>Enterobacterales</taxon>
        <taxon>Yersiniaceae</taxon>
        <taxon>Yersinia</taxon>
    </lineage>
</organism>
<evidence type="ECO:0000255" key="1">
    <source>
        <dbReference type="HAMAP-Rule" id="MF_00382"/>
    </source>
</evidence>
<evidence type="ECO:0000305" key="2"/>